<dbReference type="EC" id="3.2.1.-"/>
<dbReference type="EMBL" id="X91881">
    <property type="protein sequence ID" value="CAA62988.1"/>
    <property type="molecule type" value="Genomic_DNA"/>
</dbReference>
<dbReference type="EMBL" id="FN667969">
    <property type="protein sequence ID" value="CBJ56560.1"/>
    <property type="molecule type" value="Genomic_DNA"/>
</dbReference>
<dbReference type="PIR" id="S60204">
    <property type="entry name" value="S60204"/>
</dbReference>
<dbReference type="SMR" id="Q43592"/>
<dbReference type="PaxDb" id="4097-Q43592"/>
<dbReference type="Proteomes" id="UP000084051">
    <property type="component" value="Unplaced"/>
</dbReference>
<dbReference type="GO" id="GO:0008422">
    <property type="term" value="F:beta-glucosidase activity"/>
    <property type="evidence" value="ECO:0007669"/>
    <property type="project" value="InterPro"/>
</dbReference>
<dbReference type="GO" id="GO:0005975">
    <property type="term" value="P:carbohydrate metabolic process"/>
    <property type="evidence" value="ECO:0007669"/>
    <property type="project" value="InterPro"/>
</dbReference>
<dbReference type="GO" id="GO:0071365">
    <property type="term" value="P:cellular response to auxin stimulus"/>
    <property type="evidence" value="ECO:0000270"/>
    <property type="project" value="UniProtKB"/>
</dbReference>
<dbReference type="GO" id="GO:0071368">
    <property type="term" value="P:cellular response to cytokinin stimulus"/>
    <property type="evidence" value="ECO:0000270"/>
    <property type="project" value="UniProtKB"/>
</dbReference>
<dbReference type="GO" id="GO:0009691">
    <property type="term" value="P:cytokinin biosynthetic process"/>
    <property type="evidence" value="ECO:0007669"/>
    <property type="project" value="UniProtKB-KW"/>
</dbReference>
<dbReference type="InterPro" id="IPR006065">
    <property type="entry name" value="Glyco_hydro_41"/>
</dbReference>
<dbReference type="InterPro" id="IPR006064">
    <property type="entry name" value="Glycosidase"/>
</dbReference>
<dbReference type="Pfam" id="PF02027">
    <property type="entry name" value="RolB_RolC"/>
    <property type="match status" value="1"/>
</dbReference>
<dbReference type="PRINTS" id="PR00746">
    <property type="entry name" value="GLHYDRLASE41"/>
</dbReference>
<accession>Q43592</accession>
<proteinExistence type="evidence at transcript level"/>
<comment type="function">
    <text evidence="1">Hydrolyzes cytokinin glucosides thus liberating free cytokinins.</text>
</comment>
<comment type="tissue specificity">
    <text evidence="2">Accumulates in young leaves and shoot tips.</text>
</comment>
<comment type="induction">
    <text evidence="2">Down-regulated by auxin but induced by cytokinin.</text>
</comment>
<evidence type="ECO:0000250" key="1"/>
<evidence type="ECO:0000269" key="2">
    <source>
    </source>
</evidence>
<sequence length="180" mass="20045">MAEDNLCALFFKLTVQGVTCSDGLKKHMENAEDELKPLLEHGPQGESMDIDEEEVSGAKRLLYLYVDCPTMMRCFFGRSMPYNCRGGTLLTDLPPYHADASPHEVSRGLGKATDFFSYEDAIRSAYFAAFSFSGPVRKLDQQLELTSTRGEPLTFSLYARSPGRLEPGELVRHGECKFAG</sequence>
<gene>
    <name type="primary">TROLC</name>
</gene>
<keyword id="KW-0203">Cytokinin biosynthesis</keyword>
<keyword id="KW-0326">Glycosidase</keyword>
<keyword id="KW-0378">Hydrolase</keyword>
<keyword id="KW-1185">Reference proteome</keyword>
<reference key="1">
    <citation type="journal article" date="1995" name="Mol. Gen. Genet.">
        <title>Horizontal gene transfer: regulated expression of a tobacco homologue of the Agrobacterium rhizogenes rolC gene.</title>
        <authorList>
            <person name="Meyer A.D."/>
            <person name="Ichikawa T."/>
            <person name="Meins F. Jr."/>
        </authorList>
    </citation>
    <scope>NUCLEOTIDE SEQUENCE [GENOMIC DNA]</scope>
    <scope>TISSUE SPECIFICITY</scope>
    <scope>INDUCTION BY AUXIN AND CYTOKININ</scope>
    <source>
        <strain>cv. Havana 425</strain>
        <tissue>Leaf</tissue>
    </source>
</reference>
<protein>
    <recommendedName>
        <fullName>Cytokinin-beta-glucosidase</fullName>
        <ecNumber>3.2.1.-</ecNumber>
    </recommendedName>
    <alternativeName>
        <fullName>Protein ROL C</fullName>
        <shortName>trolC</shortName>
    </alternativeName>
</protein>
<name>ROLC_TOBAC</name>
<organism>
    <name type="scientific">Nicotiana tabacum</name>
    <name type="common">Common tobacco</name>
    <dbReference type="NCBI Taxonomy" id="4097"/>
    <lineage>
        <taxon>Eukaryota</taxon>
        <taxon>Viridiplantae</taxon>
        <taxon>Streptophyta</taxon>
        <taxon>Embryophyta</taxon>
        <taxon>Tracheophyta</taxon>
        <taxon>Spermatophyta</taxon>
        <taxon>Magnoliopsida</taxon>
        <taxon>eudicotyledons</taxon>
        <taxon>Gunneridae</taxon>
        <taxon>Pentapetalae</taxon>
        <taxon>asterids</taxon>
        <taxon>lamiids</taxon>
        <taxon>Solanales</taxon>
        <taxon>Solanaceae</taxon>
        <taxon>Nicotianoideae</taxon>
        <taxon>Nicotianeae</taxon>
        <taxon>Nicotiana</taxon>
    </lineage>
</organism>
<feature type="chain" id="PRO_0000421061" description="Cytokinin-beta-glucosidase">
    <location>
        <begin position="1"/>
        <end position="180"/>
    </location>
</feature>